<keyword id="KW-0240">DNA-directed RNA polymerase</keyword>
<keyword id="KW-0548">Nucleotidyltransferase</keyword>
<keyword id="KW-1185">Reference proteome</keyword>
<keyword id="KW-0804">Transcription</keyword>
<keyword id="KW-0808">Transferase</keyword>
<organism>
    <name type="scientific">Staphylococcus saprophyticus subsp. saprophyticus (strain ATCC 15305 / DSM 20229 / NCIMB 8711 / NCTC 7292 / S-41)</name>
    <dbReference type="NCBI Taxonomy" id="342451"/>
    <lineage>
        <taxon>Bacteria</taxon>
        <taxon>Bacillati</taxon>
        <taxon>Bacillota</taxon>
        <taxon>Bacilli</taxon>
        <taxon>Bacillales</taxon>
        <taxon>Staphylococcaceae</taxon>
        <taxon>Staphylococcus</taxon>
    </lineage>
</organism>
<reference key="1">
    <citation type="journal article" date="2005" name="Proc. Natl. Acad. Sci. U.S.A.">
        <title>Whole genome sequence of Staphylococcus saprophyticus reveals the pathogenesis of uncomplicated urinary tract infection.</title>
        <authorList>
            <person name="Kuroda M."/>
            <person name="Yamashita A."/>
            <person name="Hirakawa H."/>
            <person name="Kumano M."/>
            <person name="Morikawa K."/>
            <person name="Higashide M."/>
            <person name="Maruyama A."/>
            <person name="Inose Y."/>
            <person name="Matoba K."/>
            <person name="Toh H."/>
            <person name="Kuhara S."/>
            <person name="Hattori M."/>
            <person name="Ohta T."/>
        </authorList>
    </citation>
    <scope>NUCLEOTIDE SEQUENCE [LARGE SCALE GENOMIC DNA]</scope>
    <source>
        <strain>ATCC 15305 / DSM 20229 / NCIMB 8711 / NCTC 7292 / S-41</strain>
    </source>
</reference>
<proteinExistence type="inferred from homology"/>
<comment type="function">
    <text evidence="1">DNA-dependent RNA polymerase catalyzes the transcription of DNA into RNA using the four ribonucleoside triphosphates as substrates.</text>
</comment>
<comment type="catalytic activity">
    <reaction evidence="1">
        <text>RNA(n) + a ribonucleoside 5'-triphosphate = RNA(n+1) + diphosphate</text>
        <dbReference type="Rhea" id="RHEA:21248"/>
        <dbReference type="Rhea" id="RHEA-COMP:14527"/>
        <dbReference type="Rhea" id="RHEA-COMP:17342"/>
        <dbReference type="ChEBI" id="CHEBI:33019"/>
        <dbReference type="ChEBI" id="CHEBI:61557"/>
        <dbReference type="ChEBI" id="CHEBI:140395"/>
        <dbReference type="EC" id="2.7.7.6"/>
    </reaction>
</comment>
<comment type="subunit">
    <text evidence="1">Homodimer. The RNAP catalytic core consists of 2 alpha, 1 beta, 1 beta' and 1 omega subunit. When a sigma factor is associated with the core the holoenzyme is formed, which can initiate transcription.</text>
</comment>
<comment type="domain">
    <text evidence="1">The N-terminal domain is essential for RNAP assembly and basal transcription, whereas the C-terminal domain is involved in interaction with transcriptional regulators and with upstream promoter elements.</text>
</comment>
<comment type="similarity">
    <text evidence="1">Belongs to the RNA polymerase alpha chain family.</text>
</comment>
<gene>
    <name evidence="1" type="primary">rpoA</name>
    <name type="ordered locus">SSP0689</name>
</gene>
<protein>
    <recommendedName>
        <fullName evidence="1">DNA-directed RNA polymerase subunit alpha</fullName>
        <shortName evidence="1">RNAP subunit alpha</shortName>
        <ecNumber evidence="1">2.7.7.6</ecNumber>
    </recommendedName>
    <alternativeName>
        <fullName evidence="1">RNA polymerase subunit alpha</fullName>
    </alternativeName>
    <alternativeName>
        <fullName evidence="1">Transcriptase subunit alpha</fullName>
    </alternativeName>
</protein>
<evidence type="ECO:0000255" key="1">
    <source>
        <dbReference type="HAMAP-Rule" id="MF_00059"/>
    </source>
</evidence>
<accession>Q49ZE2</accession>
<sequence>MIEIEKPRIETIEISEDAKFGKFVVEPLERGYGTTLGNSLRRILLSSLPGAAVKYIEIEGVLHEFSAIDNVVEDVSTIIMNIKKLALKIYSEEDKTLEIDVKDEGDVTASDITHDSDVEILNPEIKIATVSKGGHLKIRLVANKGRGYALAEQNKTSDLPIGVIPVDSLYSPVERVNYTVENTRVGQSSDFDKLTLDVWTNGSITPQESVSLAAKILTEHLNIFVGLTDEAQNAEIMIEKEEDQKEKVLEMSIEELDLSVRSYNCLKRAGINSVQELADKSEADMMKVRNLGRKSLEEVKYKLEDLGLGLRKED</sequence>
<name>RPOA_STAS1</name>
<feature type="chain" id="PRO_0000225304" description="DNA-directed RNA polymerase subunit alpha">
    <location>
        <begin position="1"/>
        <end position="314"/>
    </location>
</feature>
<feature type="region of interest" description="Alpha N-terminal domain (alpha-NTD)" evidence="1">
    <location>
        <begin position="1"/>
        <end position="228"/>
    </location>
</feature>
<feature type="region of interest" description="Alpha C-terminal domain (alpha-CTD)" evidence="1">
    <location>
        <begin position="245"/>
        <end position="314"/>
    </location>
</feature>
<dbReference type="EC" id="2.7.7.6" evidence="1"/>
<dbReference type="EMBL" id="AP008934">
    <property type="protein sequence ID" value="BAE17834.1"/>
    <property type="molecule type" value="Genomic_DNA"/>
</dbReference>
<dbReference type="RefSeq" id="WP_011302606.1">
    <property type="nucleotide sequence ID" value="NZ_MTGA01000036.1"/>
</dbReference>
<dbReference type="SMR" id="Q49ZE2"/>
<dbReference type="GeneID" id="3615988"/>
<dbReference type="KEGG" id="ssp:SSP0689"/>
<dbReference type="PATRIC" id="fig|342451.11.peg.691"/>
<dbReference type="eggNOG" id="COG0202">
    <property type="taxonomic scope" value="Bacteria"/>
</dbReference>
<dbReference type="HOGENOM" id="CLU_053084_0_1_9"/>
<dbReference type="OrthoDB" id="9805706at2"/>
<dbReference type="Proteomes" id="UP000006371">
    <property type="component" value="Chromosome"/>
</dbReference>
<dbReference type="GO" id="GO:0005737">
    <property type="term" value="C:cytoplasm"/>
    <property type="evidence" value="ECO:0007669"/>
    <property type="project" value="UniProtKB-ARBA"/>
</dbReference>
<dbReference type="GO" id="GO:0000428">
    <property type="term" value="C:DNA-directed RNA polymerase complex"/>
    <property type="evidence" value="ECO:0007669"/>
    <property type="project" value="UniProtKB-KW"/>
</dbReference>
<dbReference type="GO" id="GO:0003677">
    <property type="term" value="F:DNA binding"/>
    <property type="evidence" value="ECO:0007669"/>
    <property type="project" value="UniProtKB-UniRule"/>
</dbReference>
<dbReference type="GO" id="GO:0003899">
    <property type="term" value="F:DNA-directed RNA polymerase activity"/>
    <property type="evidence" value="ECO:0007669"/>
    <property type="project" value="UniProtKB-UniRule"/>
</dbReference>
<dbReference type="GO" id="GO:0046983">
    <property type="term" value="F:protein dimerization activity"/>
    <property type="evidence" value="ECO:0007669"/>
    <property type="project" value="InterPro"/>
</dbReference>
<dbReference type="GO" id="GO:0006351">
    <property type="term" value="P:DNA-templated transcription"/>
    <property type="evidence" value="ECO:0007669"/>
    <property type="project" value="UniProtKB-UniRule"/>
</dbReference>
<dbReference type="CDD" id="cd06928">
    <property type="entry name" value="RNAP_alpha_NTD"/>
    <property type="match status" value="1"/>
</dbReference>
<dbReference type="FunFam" id="1.10.150.20:FF:000001">
    <property type="entry name" value="DNA-directed RNA polymerase subunit alpha"/>
    <property type="match status" value="1"/>
</dbReference>
<dbReference type="FunFam" id="2.170.120.12:FF:000001">
    <property type="entry name" value="DNA-directed RNA polymerase subunit alpha"/>
    <property type="match status" value="1"/>
</dbReference>
<dbReference type="Gene3D" id="1.10.150.20">
    <property type="entry name" value="5' to 3' exonuclease, C-terminal subdomain"/>
    <property type="match status" value="1"/>
</dbReference>
<dbReference type="Gene3D" id="2.170.120.12">
    <property type="entry name" value="DNA-directed RNA polymerase, insert domain"/>
    <property type="match status" value="1"/>
</dbReference>
<dbReference type="Gene3D" id="3.30.1360.10">
    <property type="entry name" value="RNA polymerase, RBP11-like subunit"/>
    <property type="match status" value="1"/>
</dbReference>
<dbReference type="HAMAP" id="MF_00059">
    <property type="entry name" value="RNApol_bact_RpoA"/>
    <property type="match status" value="1"/>
</dbReference>
<dbReference type="InterPro" id="IPR011262">
    <property type="entry name" value="DNA-dir_RNA_pol_insert"/>
</dbReference>
<dbReference type="InterPro" id="IPR011263">
    <property type="entry name" value="DNA-dir_RNA_pol_RpoA/D/Rpb3"/>
</dbReference>
<dbReference type="InterPro" id="IPR011773">
    <property type="entry name" value="DNA-dir_RpoA"/>
</dbReference>
<dbReference type="InterPro" id="IPR036603">
    <property type="entry name" value="RBP11-like"/>
</dbReference>
<dbReference type="InterPro" id="IPR011260">
    <property type="entry name" value="RNAP_asu_C"/>
</dbReference>
<dbReference type="InterPro" id="IPR036643">
    <property type="entry name" value="RNApol_insert_sf"/>
</dbReference>
<dbReference type="NCBIfam" id="NF003513">
    <property type="entry name" value="PRK05182.1-2"/>
    <property type="match status" value="1"/>
</dbReference>
<dbReference type="NCBIfam" id="NF003515">
    <property type="entry name" value="PRK05182.2-1"/>
    <property type="match status" value="1"/>
</dbReference>
<dbReference type="NCBIfam" id="NF003519">
    <property type="entry name" value="PRK05182.2-5"/>
    <property type="match status" value="1"/>
</dbReference>
<dbReference type="NCBIfam" id="TIGR02027">
    <property type="entry name" value="rpoA"/>
    <property type="match status" value="1"/>
</dbReference>
<dbReference type="Pfam" id="PF01000">
    <property type="entry name" value="RNA_pol_A_bac"/>
    <property type="match status" value="1"/>
</dbReference>
<dbReference type="Pfam" id="PF03118">
    <property type="entry name" value="RNA_pol_A_CTD"/>
    <property type="match status" value="1"/>
</dbReference>
<dbReference type="Pfam" id="PF01193">
    <property type="entry name" value="RNA_pol_L"/>
    <property type="match status" value="1"/>
</dbReference>
<dbReference type="SMART" id="SM00662">
    <property type="entry name" value="RPOLD"/>
    <property type="match status" value="1"/>
</dbReference>
<dbReference type="SUPFAM" id="SSF47789">
    <property type="entry name" value="C-terminal domain of RNA polymerase alpha subunit"/>
    <property type="match status" value="1"/>
</dbReference>
<dbReference type="SUPFAM" id="SSF56553">
    <property type="entry name" value="Insert subdomain of RNA polymerase alpha subunit"/>
    <property type="match status" value="1"/>
</dbReference>
<dbReference type="SUPFAM" id="SSF55257">
    <property type="entry name" value="RBP11-like subunits of RNA polymerase"/>
    <property type="match status" value="1"/>
</dbReference>